<organism>
    <name type="scientific">Cochliobolus heterostrophus</name>
    <name type="common">Southern corn leaf blight fungus</name>
    <name type="synonym">Bipolaris maydis</name>
    <dbReference type="NCBI Taxonomy" id="5016"/>
    <lineage>
        <taxon>Eukaryota</taxon>
        <taxon>Fungi</taxon>
        <taxon>Dikarya</taxon>
        <taxon>Ascomycota</taxon>
        <taxon>Pezizomycotina</taxon>
        <taxon>Dothideomycetes</taxon>
        <taxon>Pleosporomycetidae</taxon>
        <taxon>Pleosporales</taxon>
        <taxon>Pleosporineae</taxon>
        <taxon>Pleosporaceae</taxon>
        <taxon>Bipolaris</taxon>
    </lineage>
</organism>
<dbReference type="EMBL" id="AB009971">
    <property type="protein sequence ID" value="BAD99947.1"/>
    <property type="molecule type" value="Genomic_DNA"/>
</dbReference>
<dbReference type="SMR" id="Q4R9N3"/>
<dbReference type="OMA" id="WVPRSVN"/>
<dbReference type="GO" id="GO:0005737">
    <property type="term" value="C:cytoplasm"/>
    <property type="evidence" value="ECO:0007669"/>
    <property type="project" value="UniProtKB-KW"/>
</dbReference>
<dbReference type="GO" id="GO:0005874">
    <property type="term" value="C:microtubule"/>
    <property type="evidence" value="ECO:0007669"/>
    <property type="project" value="UniProtKB-KW"/>
</dbReference>
<dbReference type="GO" id="GO:0005525">
    <property type="term" value="F:GTP binding"/>
    <property type="evidence" value="ECO:0007669"/>
    <property type="project" value="UniProtKB-KW"/>
</dbReference>
<dbReference type="GO" id="GO:0003924">
    <property type="term" value="F:GTPase activity"/>
    <property type="evidence" value="ECO:0007669"/>
    <property type="project" value="InterPro"/>
</dbReference>
<dbReference type="GO" id="GO:0046872">
    <property type="term" value="F:metal ion binding"/>
    <property type="evidence" value="ECO:0007669"/>
    <property type="project" value="UniProtKB-KW"/>
</dbReference>
<dbReference type="GO" id="GO:0005200">
    <property type="term" value="F:structural constituent of cytoskeleton"/>
    <property type="evidence" value="ECO:0007669"/>
    <property type="project" value="InterPro"/>
</dbReference>
<dbReference type="GO" id="GO:0007017">
    <property type="term" value="P:microtubule-based process"/>
    <property type="evidence" value="ECO:0007669"/>
    <property type="project" value="InterPro"/>
</dbReference>
<dbReference type="CDD" id="cd02187">
    <property type="entry name" value="beta_tubulin"/>
    <property type="match status" value="1"/>
</dbReference>
<dbReference type="FunFam" id="1.10.287.600:FF:000003">
    <property type="entry name" value="Tubulin beta chain"/>
    <property type="match status" value="1"/>
</dbReference>
<dbReference type="FunFam" id="3.30.1330.20:FF:000002">
    <property type="entry name" value="Tubulin beta chain"/>
    <property type="match status" value="1"/>
</dbReference>
<dbReference type="FunFam" id="3.40.50.1440:FF:000009">
    <property type="entry name" value="Tubulin beta chain"/>
    <property type="match status" value="1"/>
</dbReference>
<dbReference type="Gene3D" id="1.10.287.600">
    <property type="entry name" value="Helix hairpin bin"/>
    <property type="match status" value="1"/>
</dbReference>
<dbReference type="Gene3D" id="3.30.1330.20">
    <property type="entry name" value="Tubulin/FtsZ, C-terminal domain"/>
    <property type="match status" value="1"/>
</dbReference>
<dbReference type="Gene3D" id="3.40.50.1440">
    <property type="entry name" value="Tubulin/FtsZ, GTPase domain"/>
    <property type="match status" value="1"/>
</dbReference>
<dbReference type="InterPro" id="IPR013838">
    <property type="entry name" value="Beta-tubulin_BS"/>
</dbReference>
<dbReference type="InterPro" id="IPR002453">
    <property type="entry name" value="Beta_tubulin"/>
</dbReference>
<dbReference type="InterPro" id="IPR008280">
    <property type="entry name" value="Tub_FtsZ_C"/>
</dbReference>
<dbReference type="InterPro" id="IPR000217">
    <property type="entry name" value="Tubulin"/>
</dbReference>
<dbReference type="InterPro" id="IPR037103">
    <property type="entry name" value="Tubulin/FtsZ-like_C"/>
</dbReference>
<dbReference type="InterPro" id="IPR018316">
    <property type="entry name" value="Tubulin/FtsZ_2-layer-sand-dom"/>
</dbReference>
<dbReference type="InterPro" id="IPR036525">
    <property type="entry name" value="Tubulin/FtsZ_GTPase_sf"/>
</dbReference>
<dbReference type="InterPro" id="IPR023123">
    <property type="entry name" value="Tubulin_C"/>
</dbReference>
<dbReference type="InterPro" id="IPR017975">
    <property type="entry name" value="Tubulin_CS"/>
</dbReference>
<dbReference type="InterPro" id="IPR003008">
    <property type="entry name" value="Tubulin_FtsZ_GTPase"/>
</dbReference>
<dbReference type="PANTHER" id="PTHR11588">
    <property type="entry name" value="TUBULIN"/>
    <property type="match status" value="1"/>
</dbReference>
<dbReference type="Pfam" id="PF00091">
    <property type="entry name" value="Tubulin"/>
    <property type="match status" value="1"/>
</dbReference>
<dbReference type="Pfam" id="PF03953">
    <property type="entry name" value="Tubulin_C"/>
    <property type="match status" value="1"/>
</dbReference>
<dbReference type="PRINTS" id="PR01163">
    <property type="entry name" value="BETATUBULIN"/>
</dbReference>
<dbReference type="PRINTS" id="PR01161">
    <property type="entry name" value="TUBULIN"/>
</dbReference>
<dbReference type="SMART" id="SM00864">
    <property type="entry name" value="Tubulin"/>
    <property type="match status" value="1"/>
</dbReference>
<dbReference type="SMART" id="SM00865">
    <property type="entry name" value="Tubulin_C"/>
    <property type="match status" value="1"/>
</dbReference>
<dbReference type="SUPFAM" id="SSF55307">
    <property type="entry name" value="Tubulin C-terminal domain-like"/>
    <property type="match status" value="1"/>
</dbReference>
<dbReference type="SUPFAM" id="SSF52490">
    <property type="entry name" value="Tubulin nucleotide-binding domain-like"/>
    <property type="match status" value="1"/>
</dbReference>
<dbReference type="PROSITE" id="PS00227">
    <property type="entry name" value="TUBULIN"/>
    <property type="match status" value="1"/>
</dbReference>
<dbReference type="PROSITE" id="PS00228">
    <property type="entry name" value="TUBULIN_B_AUTOREG"/>
    <property type="match status" value="1"/>
</dbReference>
<evidence type="ECO:0000250" key="1">
    <source>
        <dbReference type="UniProtKB" id="P68363"/>
    </source>
</evidence>
<evidence type="ECO:0000250" key="2">
    <source>
        <dbReference type="UniProtKB" id="Q13509"/>
    </source>
</evidence>
<evidence type="ECO:0000256" key="3">
    <source>
        <dbReference type="SAM" id="MobiDB-lite"/>
    </source>
</evidence>
<evidence type="ECO:0000305" key="4"/>
<proteinExistence type="inferred from homology"/>
<name>TBB_COCHE</name>
<accession>Q4R9N3</accession>
<comment type="function">
    <text>Tubulin is the major constituent of microtubules, a cylinder consisting of laterally associated linear protofilaments composed of alpha- and beta-tubulin heterodimers. Microtubules grow by the addition of GTP-tubulin dimers to the microtubule end, where a stabilizing cap forms. Below the cap, tubulin dimers are in GDP-bound state, owing to GTPase activity of alpha-tubulin.</text>
</comment>
<comment type="cofactor">
    <cofactor evidence="1">
        <name>Mg(2+)</name>
        <dbReference type="ChEBI" id="CHEBI:18420"/>
    </cofactor>
</comment>
<comment type="subunit">
    <text>Dimer of alpha and beta chains. A typical microtubule is a hollow water-filled tube with an outer diameter of 25 nm and an inner diameter of 15 nM. Alpha-beta heterodimers associate head-to-tail to form protofilaments running lengthwise along the microtubule wall with the beta-tubulin subunit facing the microtubule plus end conferring a structural polarity. Microtubules usually have 13 protofilaments but different protofilament numbers can be found in some organisms and specialized cells.</text>
</comment>
<comment type="subcellular location">
    <subcellularLocation>
        <location>Cytoplasm</location>
        <location>Cytoskeleton</location>
    </subcellularLocation>
</comment>
<comment type="similarity">
    <text evidence="4">Belongs to the tubulin family.</text>
</comment>
<feature type="chain" id="PRO_0000048400" description="Tubulin beta chain">
    <location>
        <begin position="1"/>
        <end position="447"/>
    </location>
</feature>
<feature type="region of interest" description="Disordered" evidence="3">
    <location>
        <begin position="424"/>
        <end position="447"/>
    </location>
</feature>
<feature type="compositionally biased region" description="Acidic residues" evidence="3">
    <location>
        <begin position="432"/>
        <end position="447"/>
    </location>
</feature>
<feature type="binding site" evidence="2">
    <location>
        <position position="11"/>
    </location>
    <ligand>
        <name>GTP</name>
        <dbReference type="ChEBI" id="CHEBI:37565"/>
    </ligand>
</feature>
<feature type="binding site" evidence="1">
    <location>
        <position position="69"/>
    </location>
    <ligand>
        <name>GTP</name>
        <dbReference type="ChEBI" id="CHEBI:37565"/>
    </ligand>
</feature>
<feature type="binding site" evidence="1">
    <location>
        <position position="69"/>
    </location>
    <ligand>
        <name>Mg(2+)</name>
        <dbReference type="ChEBI" id="CHEBI:18420"/>
    </ligand>
</feature>
<feature type="binding site" evidence="2">
    <location>
        <position position="138"/>
    </location>
    <ligand>
        <name>GTP</name>
        <dbReference type="ChEBI" id="CHEBI:37565"/>
    </ligand>
</feature>
<feature type="binding site" evidence="2">
    <location>
        <position position="142"/>
    </location>
    <ligand>
        <name>GTP</name>
        <dbReference type="ChEBI" id="CHEBI:37565"/>
    </ligand>
</feature>
<feature type="binding site" evidence="2">
    <location>
        <position position="143"/>
    </location>
    <ligand>
        <name>GTP</name>
        <dbReference type="ChEBI" id="CHEBI:37565"/>
    </ligand>
</feature>
<feature type="binding site" evidence="2">
    <location>
        <position position="144"/>
    </location>
    <ligand>
        <name>GTP</name>
        <dbReference type="ChEBI" id="CHEBI:37565"/>
    </ligand>
</feature>
<feature type="binding site" evidence="2">
    <location>
        <position position="204"/>
    </location>
    <ligand>
        <name>GTP</name>
        <dbReference type="ChEBI" id="CHEBI:37565"/>
    </ligand>
</feature>
<feature type="binding site" evidence="2">
    <location>
        <position position="226"/>
    </location>
    <ligand>
        <name>GTP</name>
        <dbReference type="ChEBI" id="CHEBI:37565"/>
    </ligand>
</feature>
<reference key="1">
    <citation type="journal article" date="1998" name="J. Gen. Appl. Microbiol.">
        <title>Molecular analysis and characterization of the Cochliobolus heterostrophus beta-tubulin gene and its possible role in coferring resistance to benomyl.</title>
        <authorList>
            <person name="Gafur A."/>
            <person name="Tanaka C."/>
            <person name="Shimizu K."/>
            <person name="Ouchi S."/>
            <person name="Tsuda M."/>
        </authorList>
    </citation>
    <scope>NUCLEOTIDE SEQUENCE [GENOMIC DNA]</scope>
    <source>
        <strain>HITO7711</strain>
    </source>
</reference>
<keyword id="KW-0963">Cytoplasm</keyword>
<keyword id="KW-0206">Cytoskeleton</keyword>
<keyword id="KW-0342">GTP-binding</keyword>
<keyword id="KW-0460">Magnesium</keyword>
<keyword id="KW-0479">Metal-binding</keyword>
<keyword id="KW-0493">Microtubule</keyword>
<keyword id="KW-0547">Nucleotide-binding</keyword>
<gene>
    <name type="primary">TUB1</name>
</gene>
<protein>
    <recommendedName>
        <fullName>Tubulin beta chain</fullName>
    </recommendedName>
    <alternativeName>
        <fullName>Beta-tubulin</fullName>
    </alternativeName>
</protein>
<sequence>MREIVHLQTGQCGNQIGAAFWQTISGEHGLDGSGVYNGTSDLQLERMNVYFNEASNNKFVPRAVLVDLEPGTMDAVRAGPFGQLFRPDNFVFGQSGAGNNWAKGHYTEGAELVDQVLDVVRREAEGCDCLQGFQITHSLGGGTGAGMGTLLISKIREEFPDRMMATYSVVPSPKVSDTVVEPYNATLSIHQLVENSDETFCIDNEALYDICMRTLKLNNPSYGDLNHLVSAVMSGVTTCLRFPGQLNSDLRKLAVNMVPFPRLHFFMVGFAPLTSRGAHSFRAVTVPELTQQMFDPKNMMAASDFRNGRYLTCSAYFRGKVSMKEVEDQMRNVQNKNSSYFVEWIPNNVQTALCSIPPRGLKMSSTFVGNSTSIQELFKRVGDQFTAMFRRKAFLHWYTGEGMDEMEFTEAESNMNDLVSEYQQYQEASVSEGEEEYDEEAPLEAEE</sequence>